<evidence type="ECO:0000255" key="1">
    <source>
        <dbReference type="HAMAP-Rule" id="MF_01205"/>
    </source>
</evidence>
<reference key="1">
    <citation type="journal article" date="2002" name="Proc. Natl. Acad. Sci. U.S.A.">
        <title>Extensive mosaic structure revealed by the complete genome sequence of uropathogenic Escherichia coli.</title>
        <authorList>
            <person name="Welch R.A."/>
            <person name="Burland V."/>
            <person name="Plunkett G. III"/>
            <person name="Redford P."/>
            <person name="Roesch P."/>
            <person name="Rasko D."/>
            <person name="Buckles E.L."/>
            <person name="Liou S.-R."/>
            <person name="Boutin A."/>
            <person name="Hackett J."/>
            <person name="Stroud D."/>
            <person name="Mayhew G.F."/>
            <person name="Rose D.J."/>
            <person name="Zhou S."/>
            <person name="Schwartz D.C."/>
            <person name="Perna N.T."/>
            <person name="Mobley H.L.T."/>
            <person name="Donnenberg M.S."/>
            <person name="Blattner F.R."/>
        </authorList>
    </citation>
    <scope>NUCLEOTIDE SEQUENCE [LARGE SCALE GENOMIC DNA]</scope>
    <source>
        <strain>CFT073 / ATCC 700928 / UPEC</strain>
    </source>
</reference>
<accession>P0A8D7</accession>
<accession>P75918</accession>
<dbReference type="EC" id="3.1.1.106" evidence="1"/>
<dbReference type="EMBL" id="AE014075">
    <property type="protein sequence ID" value="AAN79782.1"/>
    <property type="molecule type" value="Genomic_DNA"/>
</dbReference>
<dbReference type="RefSeq" id="WP_000857405.1">
    <property type="nucleotide sequence ID" value="NZ_CP051263.1"/>
</dbReference>
<dbReference type="SMR" id="P0A8D7"/>
<dbReference type="STRING" id="199310.c1309"/>
<dbReference type="GeneID" id="93776369"/>
<dbReference type="KEGG" id="ecc:c1309"/>
<dbReference type="eggNOG" id="COG2110">
    <property type="taxonomic scope" value="Bacteria"/>
</dbReference>
<dbReference type="HOGENOM" id="CLU_046550_5_1_6"/>
<dbReference type="BioCyc" id="ECOL199310:C1309-MONOMER"/>
<dbReference type="Proteomes" id="UP000001410">
    <property type="component" value="Chromosome"/>
</dbReference>
<dbReference type="GO" id="GO:0061463">
    <property type="term" value="F:O-acetyl-ADP-ribose deacetylase activity"/>
    <property type="evidence" value="ECO:0007669"/>
    <property type="project" value="UniProtKB-EC"/>
</dbReference>
<dbReference type="GO" id="GO:0001883">
    <property type="term" value="F:purine nucleoside binding"/>
    <property type="evidence" value="ECO:0007669"/>
    <property type="project" value="UniProtKB-UniRule"/>
</dbReference>
<dbReference type="GO" id="GO:0008428">
    <property type="term" value="F:ribonuclease inhibitor activity"/>
    <property type="evidence" value="ECO:0007669"/>
    <property type="project" value="UniProtKB-UniRule"/>
</dbReference>
<dbReference type="GO" id="GO:0042278">
    <property type="term" value="P:purine nucleoside metabolic process"/>
    <property type="evidence" value="ECO:0007669"/>
    <property type="project" value="UniProtKB-UniRule"/>
</dbReference>
<dbReference type="CDD" id="cd02908">
    <property type="entry name" value="Macro_OAADPr_deacetylase"/>
    <property type="match status" value="1"/>
</dbReference>
<dbReference type="FunFam" id="3.40.220.10:FF:000003">
    <property type="entry name" value="O-acetyl-ADP-ribose deacetylase MACROD2"/>
    <property type="match status" value="1"/>
</dbReference>
<dbReference type="Gene3D" id="3.40.220.10">
    <property type="entry name" value="Leucine Aminopeptidase, subunit E, domain 1"/>
    <property type="match status" value="1"/>
</dbReference>
<dbReference type="HAMAP" id="MF_01205">
    <property type="entry name" value="YmdB"/>
    <property type="match status" value="1"/>
</dbReference>
<dbReference type="InterPro" id="IPR002589">
    <property type="entry name" value="Macro_dom"/>
</dbReference>
<dbReference type="InterPro" id="IPR043472">
    <property type="entry name" value="Macro_dom-like"/>
</dbReference>
<dbReference type="InterPro" id="IPR024900">
    <property type="entry name" value="O-Ac-ADP-ribose_deAcase"/>
</dbReference>
<dbReference type="NCBIfam" id="NF001660">
    <property type="entry name" value="PRK00431.1-1"/>
    <property type="match status" value="1"/>
</dbReference>
<dbReference type="NCBIfam" id="NF001664">
    <property type="entry name" value="PRK00431.1-6"/>
    <property type="match status" value="1"/>
</dbReference>
<dbReference type="PANTHER" id="PTHR11106">
    <property type="entry name" value="GANGLIOSIDE INDUCED DIFFERENTIATION ASSOCIATED PROTEIN 2-RELATED"/>
    <property type="match status" value="1"/>
</dbReference>
<dbReference type="PANTHER" id="PTHR11106:SF27">
    <property type="entry name" value="MACRO DOMAIN-CONTAINING PROTEIN"/>
    <property type="match status" value="1"/>
</dbReference>
<dbReference type="Pfam" id="PF01661">
    <property type="entry name" value="Macro"/>
    <property type="match status" value="1"/>
</dbReference>
<dbReference type="SMART" id="SM00506">
    <property type="entry name" value="A1pp"/>
    <property type="match status" value="1"/>
</dbReference>
<dbReference type="SUPFAM" id="SSF52949">
    <property type="entry name" value="Macro domain-like"/>
    <property type="match status" value="1"/>
</dbReference>
<dbReference type="PROSITE" id="PS51154">
    <property type="entry name" value="MACRO"/>
    <property type="match status" value="1"/>
</dbReference>
<organism>
    <name type="scientific">Escherichia coli O6:H1 (strain CFT073 / ATCC 700928 / UPEC)</name>
    <dbReference type="NCBI Taxonomy" id="199310"/>
    <lineage>
        <taxon>Bacteria</taxon>
        <taxon>Pseudomonadati</taxon>
        <taxon>Pseudomonadota</taxon>
        <taxon>Gammaproteobacteria</taxon>
        <taxon>Enterobacterales</taxon>
        <taxon>Enterobacteriaceae</taxon>
        <taxon>Escherichia</taxon>
    </lineage>
</organism>
<proteinExistence type="inferred from homology"/>
<gene>
    <name evidence="1" type="primary">ymdB</name>
    <name type="ordered locus">c1309</name>
</gene>
<sequence>MKTRIHVVQGDITKLAVDVIVNAANPSLMGGGGVDGAIHRAAGPALLDACLKVRQQQGDCPTGHAVITLAGDLPAKAVVHTVGPVWRGGEQNEDQLLQDAYLNSLRLVAANSYTSVAFPAISTGVYGYPRAAAAEIAVKTVSEFITRHALPEQVYFVCYDEENAHLYERLLTQQGDE</sequence>
<protein>
    <recommendedName>
        <fullName evidence="1">O-acetyl-ADP-ribose deacetylase</fullName>
        <ecNumber evidence="1">3.1.1.106</ecNumber>
    </recommendedName>
    <alternativeName>
        <fullName evidence="1">Regulator of RNase III activity</fullName>
    </alternativeName>
</protein>
<feature type="chain" id="PRO_0000089192" description="O-acetyl-ADP-ribose deacetylase">
    <location>
        <begin position="1"/>
        <end position="177"/>
    </location>
</feature>
<feature type="domain" description="Macro" evidence="1">
    <location>
        <begin position="1"/>
        <end position="175"/>
    </location>
</feature>
<feature type="active site" description="Proton acceptor" evidence="1">
    <location>
        <position position="35"/>
    </location>
</feature>
<feature type="binding site" evidence="1">
    <location>
        <begin position="11"/>
        <end position="12"/>
    </location>
    <ligand>
        <name>substrate</name>
    </ligand>
</feature>
<feature type="binding site" evidence="1">
    <location>
        <position position="25"/>
    </location>
    <ligand>
        <name>substrate</name>
    </ligand>
</feature>
<feature type="binding site" evidence="1">
    <location>
        <begin position="33"/>
        <end position="35"/>
    </location>
    <ligand>
        <name>substrate</name>
    </ligand>
</feature>
<feature type="binding site" evidence="1">
    <location>
        <begin position="122"/>
        <end position="126"/>
    </location>
    <ligand>
        <name>substrate</name>
    </ligand>
</feature>
<comment type="function">
    <text evidence="1">Deacetylates O-acetyl-ADP ribose to yield ADP-ribose and free acetate. Down-regulates ribonuclease 3 (RNase III) activity. Acts by interacting directly with the region of the ribonuclease that is required for dimerization/activation.</text>
</comment>
<comment type="catalytic activity">
    <reaction evidence="1">
        <text>3''-O-acetyl-ADP-D-ribose + H2O = ADP-D-ribose + acetate + H(+)</text>
        <dbReference type="Rhea" id="RHEA:59244"/>
        <dbReference type="ChEBI" id="CHEBI:15377"/>
        <dbReference type="ChEBI" id="CHEBI:15378"/>
        <dbReference type="ChEBI" id="CHEBI:30089"/>
        <dbReference type="ChEBI" id="CHEBI:57967"/>
        <dbReference type="ChEBI" id="CHEBI:142723"/>
        <dbReference type="EC" id="3.1.1.106"/>
    </reaction>
</comment>
<comment type="catalytic activity">
    <reaction evidence="1">
        <text>2''-O-acetyl-ADP-D-ribose + H2O = ADP-D-ribose + acetate + H(+)</text>
        <dbReference type="Rhea" id="RHEA:57060"/>
        <dbReference type="ChEBI" id="CHEBI:15377"/>
        <dbReference type="ChEBI" id="CHEBI:15378"/>
        <dbReference type="ChEBI" id="CHEBI:30089"/>
        <dbReference type="ChEBI" id="CHEBI:57967"/>
        <dbReference type="ChEBI" id="CHEBI:83767"/>
        <dbReference type="EC" id="3.1.1.106"/>
    </reaction>
</comment>
<comment type="subunit">
    <text evidence="1">Homodimer. Interacts with RNase III.</text>
</comment>
<comment type="similarity">
    <text evidence="1">Belongs to the MacroD-type family. YmdB subfamily.</text>
</comment>
<name>YMDB_ECOL6</name>
<keyword id="KW-0378">Hydrolase</keyword>
<keyword id="KW-1185">Reference proteome</keyword>